<feature type="chain" id="PRO_0000071426" description="Serine/threonine-protein phosphatase 2A 55 kDa regulatory subunit B beta isoform">
    <location>
        <begin position="1" status="less than"/>
        <end position="413"/>
    </location>
</feature>
<feature type="repeat" description="WD 1">
    <location>
        <begin position="1" status="less than"/>
        <end position="31"/>
    </location>
</feature>
<feature type="repeat" description="WD 2">
    <location>
        <begin position="57"/>
        <end position="98"/>
    </location>
</feature>
<feature type="repeat" description="WD 3">
    <location>
        <begin position="141"/>
        <end position="179"/>
    </location>
</feature>
<feature type="repeat" description="WD 4">
    <location>
        <begin position="190"/>
        <end position="230"/>
    </location>
</feature>
<feature type="repeat" description="WD 5">
    <location>
        <begin position="249"/>
        <end position="287"/>
    </location>
</feature>
<feature type="repeat" description="WD 6">
    <location>
        <begin position="304"/>
        <end position="345"/>
    </location>
</feature>
<feature type="repeat" description="WD 7">
    <location>
        <begin position="380"/>
        <end position="412"/>
    </location>
</feature>
<feature type="modified residue" description="Phosphoserine" evidence="2">
    <location>
        <position position="245"/>
    </location>
</feature>
<feature type="modified residue" description="Phosphotyrosine" evidence="2">
    <location>
        <position position="265"/>
    </location>
</feature>
<feature type="modified residue" description="Phosphothreonine" evidence="2">
    <location>
        <position position="268"/>
    </location>
</feature>
<feature type="non-terminal residue">
    <location>
        <position position="1"/>
    </location>
</feature>
<comment type="function">
    <text>The B regulatory subunit might modulate substrate selectivity and catalytic activity, and might also direct the localization of the catalytic enzyme to a particular subcellular compartment.</text>
</comment>
<comment type="subunit">
    <text evidence="1 2 3">PP2A consists of a common heterodimeric core enzyme, composed of a 36 kDa catalytic subunit (subunit C) and a 65 kDa constant regulatory subunit (PR65 or subunit A), that associates with a variety of regulatory subunits. Proteins that associate with the core dimer include three families of regulatory subunits B (the R2/B/PR55/B55, R3/B''/PR72/PR130/PR59 and R5/B'/B56 families), the 48 kDa variable regulatory subunit, viral proteins, and cell signaling molecules (By similarity). Interacts with TOMM22 (By similarity). Interacts with IER5 (via N- and C-terminal regions) (By similarity).</text>
</comment>
<comment type="subcellular location">
    <subcellularLocation>
        <location evidence="1">Cytoplasm</location>
    </subcellularLocation>
    <subcellularLocation>
        <location evidence="1">Cytoplasm</location>
        <location evidence="1">Cytoskeleton</location>
    </subcellularLocation>
    <subcellularLocation>
        <location evidence="1">Membrane</location>
    </subcellularLocation>
</comment>
<comment type="tissue specificity">
    <text>Brain.</text>
</comment>
<comment type="similarity">
    <text evidence="4">Belongs to the phosphatase 2A regulatory subunit B family.</text>
</comment>
<sequence>EFNHTGELLATGDKGGRVVIFQREQESKNQVHRRGEYNVYSTFQSHEPEFDYLKSLEIEEKINKIRWLPQQNAAYFLLSTNDKTVKLWKVSERDKRPEGYNLKDEEGRLRDPATITTLRVPVLRPMDLMVEATPRRVFANAHTYHINSISVNSDYETYMSADDLRINLWNFEITNQSFNIVDIKPANMEELTEVITAAEFHPHHCNTFVYSSSKGTIRLCDMRASALCDRHTKFFEEPEDPSNRSFFSEIISSISDVKFSHSGRYIMTRDYLTVKVWDLNMENRPIETYQVHDYLRSKLCSLYENDCIFDKFECVWNGSDSVIMTGSYNNFFRMFDRNTKRDVTLEASRENSKPRAILKPRKVCVGGKRRKDEISVDSLDFSKKILHTAWHPSENIIAVAATNNLYIFQDKVN</sequence>
<dbReference type="EMBL" id="M64931">
    <property type="protein sequence ID" value="AAA31458.1"/>
    <property type="molecule type" value="mRNA"/>
</dbReference>
<dbReference type="PIR" id="C38351">
    <property type="entry name" value="C38351"/>
</dbReference>
<dbReference type="SMR" id="Q00006"/>
<dbReference type="STRING" id="9986.ENSOCUP00000028847"/>
<dbReference type="PaxDb" id="9986-ENSOCUP00000022978"/>
<dbReference type="eggNOG" id="KOG1354">
    <property type="taxonomic scope" value="Eukaryota"/>
</dbReference>
<dbReference type="InParanoid" id="Q00006"/>
<dbReference type="Proteomes" id="UP000001811">
    <property type="component" value="Unplaced"/>
</dbReference>
<dbReference type="GO" id="GO:0005737">
    <property type="term" value="C:cytoplasm"/>
    <property type="evidence" value="ECO:0007669"/>
    <property type="project" value="UniProtKB-SubCell"/>
</dbReference>
<dbReference type="GO" id="GO:0005856">
    <property type="term" value="C:cytoskeleton"/>
    <property type="evidence" value="ECO:0007669"/>
    <property type="project" value="UniProtKB-SubCell"/>
</dbReference>
<dbReference type="GO" id="GO:0016020">
    <property type="term" value="C:membrane"/>
    <property type="evidence" value="ECO:0007669"/>
    <property type="project" value="UniProtKB-SubCell"/>
</dbReference>
<dbReference type="GO" id="GO:0000159">
    <property type="term" value="C:protein phosphatase type 2A complex"/>
    <property type="evidence" value="ECO:0007669"/>
    <property type="project" value="InterPro"/>
</dbReference>
<dbReference type="GO" id="GO:0019888">
    <property type="term" value="F:protein phosphatase regulator activity"/>
    <property type="evidence" value="ECO:0007669"/>
    <property type="project" value="InterPro"/>
</dbReference>
<dbReference type="FunFam" id="2.130.10.10:FF:000002">
    <property type="entry name" value="Serine/threonine-protein phosphatase 2A 55 kDa regulatory subunit B"/>
    <property type="match status" value="1"/>
</dbReference>
<dbReference type="Gene3D" id="2.130.10.10">
    <property type="entry name" value="YVTN repeat-like/Quinoprotein amine dehydrogenase"/>
    <property type="match status" value="1"/>
</dbReference>
<dbReference type="InterPro" id="IPR000009">
    <property type="entry name" value="PP2A_PR55"/>
</dbReference>
<dbReference type="InterPro" id="IPR018067">
    <property type="entry name" value="PP2A_PR55_CS"/>
</dbReference>
<dbReference type="InterPro" id="IPR015943">
    <property type="entry name" value="WD40/YVTN_repeat-like_dom_sf"/>
</dbReference>
<dbReference type="InterPro" id="IPR036322">
    <property type="entry name" value="WD40_repeat_dom_sf"/>
</dbReference>
<dbReference type="InterPro" id="IPR001680">
    <property type="entry name" value="WD40_rpt"/>
</dbReference>
<dbReference type="PANTHER" id="PTHR11871">
    <property type="entry name" value="PROTEIN PHOSPHATASE PP2A REGULATORY SUBUNIT B"/>
    <property type="match status" value="1"/>
</dbReference>
<dbReference type="PIRSF" id="PIRSF037309">
    <property type="entry name" value="PP2A_PR55"/>
    <property type="match status" value="1"/>
</dbReference>
<dbReference type="PRINTS" id="PR00600">
    <property type="entry name" value="PP2APR55"/>
</dbReference>
<dbReference type="SMART" id="SM00320">
    <property type="entry name" value="WD40"/>
    <property type="match status" value="5"/>
</dbReference>
<dbReference type="SUPFAM" id="SSF50978">
    <property type="entry name" value="WD40 repeat-like"/>
    <property type="match status" value="1"/>
</dbReference>
<dbReference type="PROSITE" id="PS01024">
    <property type="entry name" value="PR55_1"/>
    <property type="match status" value="1"/>
</dbReference>
<dbReference type="PROSITE" id="PS01025">
    <property type="entry name" value="PR55_2"/>
    <property type="match status" value="1"/>
</dbReference>
<dbReference type="PROSITE" id="PS00678">
    <property type="entry name" value="WD_REPEATS_1"/>
    <property type="match status" value="1"/>
</dbReference>
<accession>Q00006</accession>
<proteinExistence type="evidence at transcript level"/>
<protein>
    <recommendedName>
        <fullName>Serine/threonine-protein phosphatase 2A 55 kDa regulatory subunit B beta isoform</fullName>
    </recommendedName>
    <alternativeName>
        <fullName>PP2A subunit B isoform B55-beta</fullName>
    </alternativeName>
    <alternativeName>
        <fullName>PP2A subunit B isoform PR55-beta</fullName>
    </alternativeName>
    <alternativeName>
        <fullName>PP2A subunit B isoform R2-beta</fullName>
    </alternativeName>
    <alternativeName>
        <fullName>PP2A subunit B isoform beta</fullName>
    </alternativeName>
</protein>
<evidence type="ECO:0000250" key="1"/>
<evidence type="ECO:0000250" key="2">
    <source>
        <dbReference type="UniProtKB" id="P36877"/>
    </source>
</evidence>
<evidence type="ECO:0000250" key="3">
    <source>
        <dbReference type="UniProtKB" id="Q00005"/>
    </source>
</evidence>
<evidence type="ECO:0000305" key="4"/>
<keyword id="KW-0963">Cytoplasm</keyword>
<keyword id="KW-0206">Cytoskeleton</keyword>
<keyword id="KW-0472">Membrane</keyword>
<keyword id="KW-0597">Phosphoprotein</keyword>
<keyword id="KW-1185">Reference proteome</keyword>
<keyword id="KW-0677">Repeat</keyword>
<keyword id="KW-0853">WD repeat</keyword>
<organism>
    <name type="scientific">Oryctolagus cuniculus</name>
    <name type="common">Rabbit</name>
    <dbReference type="NCBI Taxonomy" id="9986"/>
    <lineage>
        <taxon>Eukaryota</taxon>
        <taxon>Metazoa</taxon>
        <taxon>Chordata</taxon>
        <taxon>Craniata</taxon>
        <taxon>Vertebrata</taxon>
        <taxon>Euteleostomi</taxon>
        <taxon>Mammalia</taxon>
        <taxon>Eutheria</taxon>
        <taxon>Euarchontoglires</taxon>
        <taxon>Glires</taxon>
        <taxon>Lagomorpha</taxon>
        <taxon>Leporidae</taxon>
        <taxon>Oryctolagus</taxon>
    </lineage>
</organism>
<name>2ABB_RABIT</name>
<reference key="1">
    <citation type="journal article" date="1991" name="Biochemistry">
        <title>Structure of the 55-kDa regulatory subunit of protein phosphatase 2A: evidence for a neuronal-specific isoform.</title>
        <authorList>
            <person name="Mayer R.E."/>
            <person name="Hendrix P."/>
            <person name="Cron P."/>
            <person name="Matthies R."/>
            <person name="Stone S.R."/>
            <person name="Goris J."/>
            <person name="Merlevede W."/>
            <person name="Hofsteenge J."/>
            <person name="Hemmings B.A."/>
        </authorList>
    </citation>
    <scope>NUCLEOTIDE SEQUENCE [MRNA]</scope>
    <source>
        <tissue>Fetal brain</tissue>
    </source>
</reference>
<gene>
    <name type="primary">PPP2R2B</name>
</gene>